<comment type="function">
    <text evidence="1">Site-specific tyrosine recombinase, which acts by catalyzing the cutting and rejoining of the recombining DNA molecules. Binds cooperatively to specific DNA consensus sequences that are separated from XerD binding sites by a short central region, forming the heterotetrameric XerC-XerD complex that recombines DNA substrates. The complex is essential to convert dimers of the bacterial chromosome into monomers to permit their segregation at cell division. It also contributes to the segregational stability of plasmids. In the complex XerC specifically exchanges the top DNA strands.</text>
</comment>
<comment type="activity regulation">
    <text evidence="1">FtsK may regulate the catalytic switch between XerC and XerD in the heterotetrameric complex during the two steps of the recombination process.</text>
</comment>
<comment type="subunit">
    <text evidence="1">Forms a cyclic heterotetrameric complex composed of two molecules of XerC and two molecules of XerD, in which XerC interacts with XerD via its C-terminal region, XerD interacts with XerC via its C-terminal region and so on.</text>
</comment>
<comment type="subcellular location">
    <subcellularLocation>
        <location evidence="1">Cytoplasm</location>
    </subcellularLocation>
</comment>
<comment type="similarity">
    <text evidence="1">Belongs to the 'phage' integrase family. XerC subfamily.</text>
</comment>
<name>XERC_ECO81</name>
<gene>
    <name evidence="1" type="primary">xerC</name>
    <name type="ordered locus">ECED1_4496</name>
</gene>
<organism>
    <name type="scientific">Escherichia coli O81 (strain ED1a)</name>
    <dbReference type="NCBI Taxonomy" id="585397"/>
    <lineage>
        <taxon>Bacteria</taxon>
        <taxon>Pseudomonadati</taxon>
        <taxon>Pseudomonadota</taxon>
        <taxon>Gammaproteobacteria</taxon>
        <taxon>Enterobacterales</taxon>
        <taxon>Enterobacteriaceae</taxon>
        <taxon>Escherichia</taxon>
    </lineage>
</organism>
<protein>
    <recommendedName>
        <fullName evidence="1">Tyrosine recombinase XerC</fullName>
    </recommendedName>
</protein>
<accession>B7N2A1</accession>
<dbReference type="EMBL" id="CU928162">
    <property type="protein sequence ID" value="CAR10472.1"/>
    <property type="molecule type" value="Genomic_DNA"/>
</dbReference>
<dbReference type="RefSeq" id="WP_000130691.1">
    <property type="nucleotide sequence ID" value="NC_011745.1"/>
</dbReference>
<dbReference type="SMR" id="B7N2A1"/>
<dbReference type="GeneID" id="75059707"/>
<dbReference type="KEGG" id="ecq:ECED1_4496"/>
<dbReference type="HOGENOM" id="CLU_027562_9_0_6"/>
<dbReference type="Proteomes" id="UP000000748">
    <property type="component" value="Chromosome"/>
</dbReference>
<dbReference type="GO" id="GO:0005737">
    <property type="term" value="C:cytoplasm"/>
    <property type="evidence" value="ECO:0007669"/>
    <property type="project" value="UniProtKB-SubCell"/>
</dbReference>
<dbReference type="GO" id="GO:0003677">
    <property type="term" value="F:DNA binding"/>
    <property type="evidence" value="ECO:0007669"/>
    <property type="project" value="UniProtKB-KW"/>
</dbReference>
<dbReference type="GO" id="GO:0009037">
    <property type="term" value="F:tyrosine-based site-specific recombinase activity"/>
    <property type="evidence" value="ECO:0007669"/>
    <property type="project" value="UniProtKB-UniRule"/>
</dbReference>
<dbReference type="GO" id="GO:0051301">
    <property type="term" value="P:cell division"/>
    <property type="evidence" value="ECO:0007669"/>
    <property type="project" value="UniProtKB-KW"/>
</dbReference>
<dbReference type="GO" id="GO:0007059">
    <property type="term" value="P:chromosome segregation"/>
    <property type="evidence" value="ECO:0007669"/>
    <property type="project" value="UniProtKB-UniRule"/>
</dbReference>
<dbReference type="GO" id="GO:0006313">
    <property type="term" value="P:DNA transposition"/>
    <property type="evidence" value="ECO:0007669"/>
    <property type="project" value="UniProtKB-UniRule"/>
</dbReference>
<dbReference type="CDD" id="cd00798">
    <property type="entry name" value="INT_XerDC_C"/>
    <property type="match status" value="1"/>
</dbReference>
<dbReference type="FunFam" id="1.10.443.10:FF:000002">
    <property type="entry name" value="Tyrosine recombinase XerC"/>
    <property type="match status" value="1"/>
</dbReference>
<dbReference type="Gene3D" id="1.10.150.130">
    <property type="match status" value="1"/>
</dbReference>
<dbReference type="Gene3D" id="1.10.443.10">
    <property type="entry name" value="Intergrase catalytic core"/>
    <property type="match status" value="1"/>
</dbReference>
<dbReference type="HAMAP" id="MF_01808">
    <property type="entry name" value="Recomb_XerC_XerD"/>
    <property type="match status" value="1"/>
</dbReference>
<dbReference type="InterPro" id="IPR044068">
    <property type="entry name" value="CB"/>
</dbReference>
<dbReference type="InterPro" id="IPR011010">
    <property type="entry name" value="DNA_brk_join_enz"/>
</dbReference>
<dbReference type="InterPro" id="IPR013762">
    <property type="entry name" value="Integrase-like_cat_sf"/>
</dbReference>
<dbReference type="InterPro" id="IPR002104">
    <property type="entry name" value="Integrase_catalytic"/>
</dbReference>
<dbReference type="InterPro" id="IPR010998">
    <property type="entry name" value="Integrase_recombinase_N"/>
</dbReference>
<dbReference type="InterPro" id="IPR004107">
    <property type="entry name" value="Integrase_SAM-like_N"/>
</dbReference>
<dbReference type="InterPro" id="IPR011931">
    <property type="entry name" value="Recomb_XerC"/>
</dbReference>
<dbReference type="InterPro" id="IPR023009">
    <property type="entry name" value="Tyrosine_recombinase_XerC/XerD"/>
</dbReference>
<dbReference type="InterPro" id="IPR050090">
    <property type="entry name" value="Tyrosine_recombinase_XerCD"/>
</dbReference>
<dbReference type="NCBIfam" id="NF001399">
    <property type="entry name" value="PRK00283.1"/>
    <property type="match status" value="1"/>
</dbReference>
<dbReference type="NCBIfam" id="TIGR02224">
    <property type="entry name" value="recomb_XerC"/>
    <property type="match status" value="1"/>
</dbReference>
<dbReference type="PANTHER" id="PTHR30349">
    <property type="entry name" value="PHAGE INTEGRASE-RELATED"/>
    <property type="match status" value="1"/>
</dbReference>
<dbReference type="PANTHER" id="PTHR30349:SF81">
    <property type="entry name" value="TYROSINE RECOMBINASE XERC"/>
    <property type="match status" value="1"/>
</dbReference>
<dbReference type="Pfam" id="PF02899">
    <property type="entry name" value="Phage_int_SAM_1"/>
    <property type="match status" value="1"/>
</dbReference>
<dbReference type="Pfam" id="PF00589">
    <property type="entry name" value="Phage_integrase"/>
    <property type="match status" value="1"/>
</dbReference>
<dbReference type="SUPFAM" id="SSF56349">
    <property type="entry name" value="DNA breaking-rejoining enzymes"/>
    <property type="match status" value="1"/>
</dbReference>
<dbReference type="SUPFAM" id="SSF47823">
    <property type="entry name" value="lambda integrase-like, N-terminal domain"/>
    <property type="match status" value="1"/>
</dbReference>
<dbReference type="PROSITE" id="PS51900">
    <property type="entry name" value="CB"/>
    <property type="match status" value="1"/>
</dbReference>
<dbReference type="PROSITE" id="PS51898">
    <property type="entry name" value="TYR_RECOMBINASE"/>
    <property type="match status" value="1"/>
</dbReference>
<feature type="chain" id="PRO_1000187592" description="Tyrosine recombinase XerC">
    <location>
        <begin position="1"/>
        <end position="298"/>
    </location>
</feature>
<feature type="domain" description="Core-binding (CB)" evidence="3">
    <location>
        <begin position="2"/>
        <end position="88"/>
    </location>
</feature>
<feature type="domain" description="Tyr recombinase" evidence="2">
    <location>
        <begin position="109"/>
        <end position="288"/>
    </location>
</feature>
<feature type="active site" evidence="1">
    <location>
        <position position="148"/>
    </location>
</feature>
<feature type="active site" evidence="1">
    <location>
        <position position="172"/>
    </location>
</feature>
<feature type="active site" evidence="1">
    <location>
        <position position="240"/>
    </location>
</feature>
<feature type="active site" evidence="1">
    <location>
        <position position="243"/>
    </location>
</feature>
<feature type="active site" evidence="1">
    <location>
        <position position="266"/>
    </location>
</feature>
<feature type="active site" description="O-(3'-phospho-DNA)-tyrosine intermediate" evidence="1">
    <location>
        <position position="275"/>
    </location>
</feature>
<keyword id="KW-0131">Cell cycle</keyword>
<keyword id="KW-0132">Cell division</keyword>
<keyword id="KW-0159">Chromosome partition</keyword>
<keyword id="KW-0963">Cytoplasm</keyword>
<keyword id="KW-0229">DNA integration</keyword>
<keyword id="KW-0233">DNA recombination</keyword>
<keyword id="KW-0238">DNA-binding</keyword>
<proteinExistence type="inferred from homology"/>
<sequence>MTDLHTDVERYLRYLSVERQLSPITLLNYQRQLEAIINFASENGLQSWQQCDVTMVRNFAVRSRRKGLGAASLALRLSALRSFFDWLVSQNELKANPAKGVSAPKAPRHLPKNIDVDDMNRLLDIDINDPLAVRDRAMLEVMYGAGLRLSELVGLDIKHLDLESGEVWVMGKGSKERRLPIGRNAVAWIEHWLDLRDLFGSEDDALFLSKLGKRISARNVQKRFAEWGIKQGLNNHVHPHKLRHSFATHMLESSGDLRGVQELLGHANLSTTQIYTHLDFQHLASVYDAAHPRAKRGK</sequence>
<evidence type="ECO:0000255" key="1">
    <source>
        <dbReference type="HAMAP-Rule" id="MF_01808"/>
    </source>
</evidence>
<evidence type="ECO:0000255" key="2">
    <source>
        <dbReference type="PROSITE-ProRule" id="PRU01246"/>
    </source>
</evidence>
<evidence type="ECO:0000255" key="3">
    <source>
        <dbReference type="PROSITE-ProRule" id="PRU01248"/>
    </source>
</evidence>
<reference key="1">
    <citation type="journal article" date="2009" name="PLoS Genet.">
        <title>Organised genome dynamics in the Escherichia coli species results in highly diverse adaptive paths.</title>
        <authorList>
            <person name="Touchon M."/>
            <person name="Hoede C."/>
            <person name="Tenaillon O."/>
            <person name="Barbe V."/>
            <person name="Baeriswyl S."/>
            <person name="Bidet P."/>
            <person name="Bingen E."/>
            <person name="Bonacorsi S."/>
            <person name="Bouchier C."/>
            <person name="Bouvet O."/>
            <person name="Calteau A."/>
            <person name="Chiapello H."/>
            <person name="Clermont O."/>
            <person name="Cruveiller S."/>
            <person name="Danchin A."/>
            <person name="Diard M."/>
            <person name="Dossat C."/>
            <person name="Karoui M.E."/>
            <person name="Frapy E."/>
            <person name="Garry L."/>
            <person name="Ghigo J.M."/>
            <person name="Gilles A.M."/>
            <person name="Johnson J."/>
            <person name="Le Bouguenec C."/>
            <person name="Lescat M."/>
            <person name="Mangenot S."/>
            <person name="Martinez-Jehanne V."/>
            <person name="Matic I."/>
            <person name="Nassif X."/>
            <person name="Oztas S."/>
            <person name="Petit M.A."/>
            <person name="Pichon C."/>
            <person name="Rouy Z."/>
            <person name="Ruf C.S."/>
            <person name="Schneider D."/>
            <person name="Tourret J."/>
            <person name="Vacherie B."/>
            <person name="Vallenet D."/>
            <person name="Medigue C."/>
            <person name="Rocha E.P.C."/>
            <person name="Denamur E."/>
        </authorList>
    </citation>
    <scope>NUCLEOTIDE SEQUENCE [LARGE SCALE GENOMIC DNA]</scope>
    <source>
        <strain>ED1a</strain>
    </source>
</reference>